<keyword id="KW-0025">Alternative splicing</keyword>
<keyword id="KW-1185">Reference proteome</keyword>
<keyword id="KW-0964">Secreted</keyword>
<keyword id="KW-0732">Signal</keyword>
<accession>A0A8J1K1A4</accession>
<accession>A0A803JMA9</accession>
<dbReference type="EMBL" id="AAMC00000000">
    <property type="status" value="NOT_ANNOTATED_CDS"/>
    <property type="molecule type" value="Genomic_DNA"/>
</dbReference>
<dbReference type="RefSeq" id="XP_031762476.1">
    <property type="nucleotide sequence ID" value="XM_031906616.1"/>
</dbReference>
<dbReference type="KEGG" id="xtr:100490273"/>
<dbReference type="AGR" id="Xenbase:XB-GENE-6469132"/>
<dbReference type="Xenbase" id="XB-GENE-6469132">
    <property type="gene designation" value="c7h1orf127"/>
</dbReference>
<dbReference type="OMA" id="ETNHKMH"/>
<dbReference type="OrthoDB" id="8946479at2759"/>
<dbReference type="Proteomes" id="UP000008143">
    <property type="component" value="Chromosome 7"/>
</dbReference>
<dbReference type="GO" id="GO:0005615">
    <property type="term" value="C:extracellular space"/>
    <property type="evidence" value="ECO:0000314"/>
    <property type="project" value="UniProtKB"/>
</dbReference>
<dbReference type="InterPro" id="IPR027956">
    <property type="entry name" value="C1orf127-like"/>
</dbReference>
<dbReference type="InterPro" id="IPR049521">
    <property type="entry name" value="DUF4556"/>
</dbReference>
<dbReference type="InterPro" id="IPR054554">
    <property type="entry name" value="ZP1/4_Ig-like"/>
</dbReference>
<dbReference type="PANTHER" id="PTHR38653">
    <property type="entry name" value="GENE 572-RELATED"/>
    <property type="match status" value="1"/>
</dbReference>
<dbReference type="PANTHER" id="PTHR38653:SF1">
    <property type="entry name" value="GENE 572-RELATED"/>
    <property type="match status" value="1"/>
</dbReference>
<dbReference type="Pfam" id="PF15094">
    <property type="entry name" value="DUF4556"/>
    <property type="match status" value="1"/>
</dbReference>
<dbReference type="Pfam" id="PF22821">
    <property type="entry name" value="ZP1_ZP4_Ig-like"/>
    <property type="match status" value="1"/>
</dbReference>
<sequence>MKNQHNTFWVLCLLFVMFDETFSAFPFGNGRIQFDPIRENSSDNIECFLDYMELWVPRKQINGLVLWLSQIMRFPVSLSSLDRSNQQLSRCKYFLDADADGNFLFRVHYTGCYVQTQEGFYKLEIHMVKKTSSGRGQSNRYLMRCPAMTAQLGREKLRCDPNYVQVSRPIPLGNSNDQADWFFSLRGELVVSIEDASLIGVEVDVSNSSVTVSGLRGQLLDGIKILDRQIDNLHLWLAHGFYAYSLEASCPSVSQHPGEEVILHIPKQRVGLVKRGSYSADILTLKNLIVGQSANVTVTVTENKQFVVINIPSHEVLQRQDCYTTIGNNPGVQFFYCIDLVLEFTEMAYPINWTLENYYECSVRVPQMIQPKPTTAETFHKIKLELHTTPRSETRTALVITPTQDNTLASTSVTLAAKLRESVHSAIVQESSKTEMSASGYDAELDHVASGEYFNRIEGSGYYAETNISAALRLRKCHHL</sequence>
<gene>
    <name evidence="3" type="primary">ciroz</name>
</gene>
<proteinExistence type="evidence at transcript level"/>
<protein>
    <recommendedName>
        <fullName>Ciliated left-right organizer protein containing ZP-N domains homolog</fullName>
    </recommendedName>
</protein>
<evidence type="ECO:0000255" key="1"/>
<evidence type="ECO:0000269" key="2">
    <source>
    </source>
</evidence>
<evidence type="ECO:0000312" key="3">
    <source>
        <dbReference type="Xenbase" id="XB-GENE-6469132"/>
    </source>
</evidence>
<name>CIROZ_XENTR</name>
<comment type="subcellular location">
    <subcellularLocation>
        <location evidence="2">Secreted</location>
    </subcellularLocation>
</comment>
<comment type="alternative products">
    <event type="alternative splicing"/>
    <isoform>
        <id>A0A8J1K1A4-1</id>
        <name>1</name>
        <sequence type="displayed"/>
    </isoform>
    <isoform>
        <id>A0A8J1K1A4-2</id>
        <name>2</name>
        <sequence type="described" ref="VSP_062561"/>
    </isoform>
</comment>
<comment type="tissue specificity">
    <text evidence="2">Expressed specifically by cells of the ciliated left-right organizer.</text>
</comment>
<comment type="disruption phenotype">
    <text evidence="2">Knockout animals, generated by CRISP-Cas technology display no discernable left-right anomalies.</text>
</comment>
<reference key="1">
    <citation type="journal article" date="2010" name="Science">
        <title>The genome of the Western clawed frog Xenopus tropicalis.</title>
        <authorList>
            <person name="Hellsten U."/>
            <person name="Harland R.M."/>
            <person name="Gilchrist M.J."/>
            <person name="Hendrix D."/>
            <person name="Jurka J."/>
            <person name="Kapitonov V."/>
            <person name="Ovcharenko I."/>
            <person name="Putnam N.H."/>
            <person name="Shu S."/>
            <person name="Taher L."/>
            <person name="Blitz I.L."/>
            <person name="Blumberg B."/>
            <person name="Dichmann D.S."/>
            <person name="Dubchak I."/>
            <person name="Amaya E."/>
            <person name="Detter J.C."/>
            <person name="Fletcher R."/>
            <person name="Gerhard D.S."/>
            <person name="Goodstein D."/>
            <person name="Graves T."/>
            <person name="Grigoriev I.V."/>
            <person name="Grimwood J."/>
            <person name="Kawashima T."/>
            <person name="Lindquist E."/>
            <person name="Lucas S.M."/>
            <person name="Mead P.E."/>
            <person name="Mitros T."/>
            <person name="Ogino H."/>
            <person name="Ohta Y."/>
            <person name="Poliakov A.V."/>
            <person name="Pollet N."/>
            <person name="Robert J."/>
            <person name="Salamov A."/>
            <person name="Sater A.K."/>
            <person name="Schmutz J."/>
            <person name="Terry A."/>
            <person name="Vize P.D."/>
            <person name="Warren W.C."/>
            <person name="Wells D."/>
            <person name="Wills A."/>
            <person name="Wilson R.K."/>
            <person name="Zimmerman L.B."/>
            <person name="Zorn A.M."/>
            <person name="Grainger R."/>
            <person name="Grammer T."/>
            <person name="Khokha M.K."/>
            <person name="Richardson P.M."/>
            <person name="Rokhsar D.S."/>
        </authorList>
    </citation>
    <scope>NUCLEOTIDE SEQUENCE [LARGE SCALE GENOMIC DNA]</scope>
</reference>
<reference key="2">
    <citation type="submission" date="2024-10" db="UniProtKB">
        <authorList>
            <consortium name="RefSeq"/>
        </authorList>
    </citation>
    <scope>IDENTIFICATION</scope>
</reference>
<reference key="3">
    <citation type="journal article" date="2024" name="Am. J. Hum. Genet.">
        <title>CIROZ is dispensable in ancestral vertebrates but essential for left-right patterning in humans.</title>
        <authorList>
            <person name="Szenker-Ravi E."/>
            <person name="Ott T."/>
            <person name="Yusof A."/>
            <person name="Chopra M."/>
            <person name="Khatoo M."/>
            <person name="Pak B."/>
            <person name="Xuan Goh W."/>
            <person name="Beckers A."/>
            <person name="Brady A.F."/>
            <person name="Ewans L.J."/>
            <person name="Djaziri N."/>
            <person name="Almontashiri N.A.M."/>
            <person name="Alghamdi M.A."/>
            <person name="Alharby E."/>
            <person name="Dasouki M."/>
            <person name="Romo L."/>
            <person name="Tan W.H."/>
            <person name="Maddirevula S."/>
            <person name="Alkuraya F.S."/>
            <person name="Giordano J.L."/>
            <person name="Alkelai A."/>
            <person name="Wapner R.J."/>
            <person name="Stals K."/>
            <person name="Alfadhel M."/>
            <person name="Alswaid A.F."/>
            <person name="Bogusch S."/>
            <person name="Schafer-Kosulya A."/>
            <person name="Vogel S."/>
            <person name="Vick P."/>
            <person name="Schweickert A."/>
            <person name="Wakeling M."/>
            <person name="Moreau de Bellaing A."/>
            <person name="Alshamsi A.M."/>
            <person name="Sanlaville D."/>
            <person name="Mbarek H."/>
            <person name="Saad C."/>
            <person name="Ellard S."/>
            <person name="Eisenhaber F."/>
            <person name="Tripolszki K."/>
            <person name="Beetz C."/>
            <person name="Bauer P."/>
            <person name="Gossler A."/>
            <person name="Eisenhaber B."/>
            <person name="Blum M."/>
            <person name="Bouvagnet P."/>
            <person name="Bertoli-Avella A."/>
            <person name="Amiel J."/>
            <person name="Gordon C.T."/>
            <person name="Reversade B."/>
        </authorList>
    </citation>
    <scope>SUBCELLULAR LOCATION</scope>
    <scope>DISRUPTION PHENOTYPE</scope>
    <scope>TISSUE SPECIFICITY</scope>
</reference>
<organism>
    <name type="scientific">Xenopus tropicalis</name>
    <name type="common">Western clawed frog</name>
    <name type="synonym">Silurana tropicalis</name>
    <dbReference type="NCBI Taxonomy" id="8364"/>
    <lineage>
        <taxon>Eukaryota</taxon>
        <taxon>Metazoa</taxon>
        <taxon>Chordata</taxon>
        <taxon>Craniata</taxon>
        <taxon>Vertebrata</taxon>
        <taxon>Euteleostomi</taxon>
        <taxon>Amphibia</taxon>
        <taxon>Batrachia</taxon>
        <taxon>Anura</taxon>
        <taxon>Pipoidea</taxon>
        <taxon>Pipidae</taxon>
        <taxon>Xenopodinae</taxon>
        <taxon>Xenopus</taxon>
        <taxon>Silurana</taxon>
    </lineage>
</organism>
<feature type="signal peptide" evidence="1">
    <location>
        <begin position="1"/>
        <end position="23"/>
    </location>
</feature>
<feature type="chain" id="PRO_5035222726" description="Ciliated left-right organizer protein containing ZP-N domains homolog">
    <location>
        <begin position="24"/>
        <end position="480"/>
    </location>
</feature>
<feature type="splice variant" id="VSP_062561" description="In isoform 2.">
    <original>QADWFFSLRGELVVSIEDASLIGVEVDVSNSSVTVSGLRGQLLDGIK</original>
    <variation>Q</variation>
    <location>
        <begin position="178"/>
        <end position="224"/>
    </location>
</feature>